<comment type="function">
    <text evidence="1">Multidrug efflux pump that functions probably as a Na(+)/drug antiporter.</text>
</comment>
<comment type="subcellular location">
    <subcellularLocation>
        <location evidence="1">Cell inner membrane</location>
        <topology evidence="1">Multi-pass membrane protein</topology>
    </subcellularLocation>
</comment>
<comment type="similarity">
    <text evidence="1">Belongs to the multi antimicrobial extrusion (MATE) (TC 2.A.66.1) family. MdtK subfamily.</text>
</comment>
<sequence>MQKYTSEARQLLALAIPVILAQVAQTAMGFVDTVMAGGYSATDMAAVAIGTSIWLPAILFGHGLLLALTPVIAQLNGSGRRERIAHQVRQGFWLAGFVSVLVMIVLWNAGYIIRSMHNIDPALADKAVGYLRALLWGAPGYLFFQVARNQCEGLAKTKPGMVMGFLGLLVNIPVNYIFIYGHFGMPELGGIGCGVATAAVYWVMFIAMLSYIKHARSMRDIRNEKGFGKPDSVVMKRLIQLGLPIALALFFEVTLFAVVALLVSPLGIVDVAGHQIALNFSSLMFVLPMSLAAAVTIRVGYRLGQGSTLGAQTAARTGLGVGICMAVVTAIFTVTLRKHIALLYNDNPEVVALAAQLMLLAAVYQISDSIQVIGSGILRGYKDTRSIFFITFTAYWVLGLPSGYILALTDLVVDRMGPAGFWMGFIIGLTSAAVLMMLRMRYLQRQPSAIILQRAAR</sequence>
<accession>B4T562</accession>
<protein>
    <recommendedName>
        <fullName evidence="1">Multidrug resistance protein MdtK</fullName>
    </recommendedName>
    <alternativeName>
        <fullName evidence="1">Multidrug-efflux transporter</fullName>
    </alternativeName>
</protein>
<keyword id="KW-0050">Antiport</keyword>
<keyword id="KW-0997">Cell inner membrane</keyword>
<keyword id="KW-1003">Cell membrane</keyword>
<keyword id="KW-0406">Ion transport</keyword>
<keyword id="KW-0472">Membrane</keyword>
<keyword id="KW-0915">Sodium</keyword>
<keyword id="KW-0739">Sodium transport</keyword>
<keyword id="KW-0812">Transmembrane</keyword>
<keyword id="KW-1133">Transmembrane helix</keyword>
<keyword id="KW-0813">Transport</keyword>
<dbReference type="EMBL" id="CP001113">
    <property type="protein sequence ID" value="ACF65387.1"/>
    <property type="molecule type" value="Genomic_DNA"/>
</dbReference>
<dbReference type="RefSeq" id="WP_001175078.1">
    <property type="nucleotide sequence ID" value="NZ_CCMR01000003.1"/>
</dbReference>
<dbReference type="SMR" id="B4T562"/>
<dbReference type="KEGG" id="see:SNSL254_A1535"/>
<dbReference type="HOGENOM" id="CLU_012893_6_0_6"/>
<dbReference type="Proteomes" id="UP000008824">
    <property type="component" value="Chromosome"/>
</dbReference>
<dbReference type="GO" id="GO:0005886">
    <property type="term" value="C:plasma membrane"/>
    <property type="evidence" value="ECO:0007669"/>
    <property type="project" value="UniProtKB-SubCell"/>
</dbReference>
<dbReference type="GO" id="GO:0015297">
    <property type="term" value="F:antiporter activity"/>
    <property type="evidence" value="ECO:0007669"/>
    <property type="project" value="UniProtKB-UniRule"/>
</dbReference>
<dbReference type="GO" id="GO:0042910">
    <property type="term" value="F:xenobiotic transmembrane transporter activity"/>
    <property type="evidence" value="ECO:0007669"/>
    <property type="project" value="UniProtKB-UniRule"/>
</dbReference>
<dbReference type="GO" id="GO:0006814">
    <property type="term" value="P:sodium ion transport"/>
    <property type="evidence" value="ECO:0007669"/>
    <property type="project" value="UniProtKB-UniRule"/>
</dbReference>
<dbReference type="GO" id="GO:0006855">
    <property type="term" value="P:xenobiotic transmembrane transport"/>
    <property type="evidence" value="ECO:0007669"/>
    <property type="project" value="UniProtKB-UniRule"/>
</dbReference>
<dbReference type="CDD" id="cd13131">
    <property type="entry name" value="MATE_NorM_like"/>
    <property type="match status" value="1"/>
</dbReference>
<dbReference type="HAMAP" id="MF_00400">
    <property type="entry name" value="MdtK"/>
    <property type="match status" value="1"/>
</dbReference>
<dbReference type="InterPro" id="IPR002528">
    <property type="entry name" value="MATE_fam"/>
</dbReference>
<dbReference type="InterPro" id="IPR050222">
    <property type="entry name" value="MATE_MdtK"/>
</dbReference>
<dbReference type="InterPro" id="IPR048279">
    <property type="entry name" value="MdtK-like"/>
</dbReference>
<dbReference type="InterPro" id="IPR022913">
    <property type="entry name" value="Multidrug-R_MdtK"/>
</dbReference>
<dbReference type="NCBIfam" id="TIGR00797">
    <property type="entry name" value="matE"/>
    <property type="match status" value="1"/>
</dbReference>
<dbReference type="PANTHER" id="PTHR43298:SF2">
    <property type="entry name" value="FMN_FAD EXPORTER YEEO-RELATED"/>
    <property type="match status" value="1"/>
</dbReference>
<dbReference type="PANTHER" id="PTHR43298">
    <property type="entry name" value="MULTIDRUG RESISTANCE PROTEIN NORM-RELATED"/>
    <property type="match status" value="1"/>
</dbReference>
<dbReference type="Pfam" id="PF01554">
    <property type="entry name" value="MatE"/>
    <property type="match status" value="2"/>
</dbReference>
<dbReference type="PIRSF" id="PIRSF006603">
    <property type="entry name" value="DinF"/>
    <property type="match status" value="1"/>
</dbReference>
<feature type="chain" id="PRO_1000191105" description="Multidrug resistance protein MdtK">
    <location>
        <begin position="1"/>
        <end position="457"/>
    </location>
</feature>
<feature type="transmembrane region" description="Helical" evidence="1">
    <location>
        <begin position="11"/>
        <end position="31"/>
    </location>
</feature>
<feature type="transmembrane region" description="Helical" evidence="1">
    <location>
        <begin position="53"/>
        <end position="73"/>
    </location>
</feature>
<feature type="transmembrane region" description="Helical" evidence="1">
    <location>
        <begin position="93"/>
        <end position="113"/>
    </location>
</feature>
<feature type="transmembrane region" description="Helical" evidence="1">
    <location>
        <begin position="127"/>
        <end position="147"/>
    </location>
</feature>
<feature type="transmembrane region" description="Helical" evidence="1">
    <location>
        <begin position="160"/>
        <end position="180"/>
    </location>
</feature>
<feature type="transmembrane region" description="Helical" evidence="1">
    <location>
        <begin position="188"/>
        <end position="208"/>
    </location>
</feature>
<feature type="transmembrane region" description="Helical" evidence="1">
    <location>
        <begin position="243"/>
        <end position="263"/>
    </location>
</feature>
<feature type="transmembrane region" description="Helical" evidence="1">
    <location>
        <begin position="276"/>
        <end position="296"/>
    </location>
</feature>
<feature type="transmembrane region" description="Helical" evidence="1">
    <location>
        <begin position="314"/>
        <end position="334"/>
    </location>
</feature>
<feature type="transmembrane region" description="Helical" evidence="1">
    <location>
        <begin position="350"/>
        <end position="370"/>
    </location>
</feature>
<feature type="transmembrane region" description="Helical" evidence="1">
    <location>
        <begin position="387"/>
        <end position="407"/>
    </location>
</feature>
<feature type="transmembrane region" description="Helical" evidence="1">
    <location>
        <begin position="418"/>
        <end position="438"/>
    </location>
</feature>
<proteinExistence type="inferred from homology"/>
<evidence type="ECO:0000255" key="1">
    <source>
        <dbReference type="HAMAP-Rule" id="MF_00400"/>
    </source>
</evidence>
<name>MDTK_SALNS</name>
<organism>
    <name type="scientific">Salmonella newport (strain SL254)</name>
    <dbReference type="NCBI Taxonomy" id="423368"/>
    <lineage>
        <taxon>Bacteria</taxon>
        <taxon>Pseudomonadati</taxon>
        <taxon>Pseudomonadota</taxon>
        <taxon>Gammaproteobacteria</taxon>
        <taxon>Enterobacterales</taxon>
        <taxon>Enterobacteriaceae</taxon>
        <taxon>Salmonella</taxon>
    </lineage>
</organism>
<reference key="1">
    <citation type="journal article" date="2011" name="J. Bacteriol.">
        <title>Comparative genomics of 28 Salmonella enterica isolates: evidence for CRISPR-mediated adaptive sublineage evolution.</title>
        <authorList>
            <person name="Fricke W.F."/>
            <person name="Mammel M.K."/>
            <person name="McDermott P.F."/>
            <person name="Tartera C."/>
            <person name="White D.G."/>
            <person name="Leclerc J.E."/>
            <person name="Ravel J."/>
            <person name="Cebula T.A."/>
        </authorList>
    </citation>
    <scope>NUCLEOTIDE SEQUENCE [LARGE SCALE GENOMIC DNA]</scope>
    <source>
        <strain>SL254</strain>
    </source>
</reference>
<gene>
    <name evidence="1" type="primary">mdtK</name>
    <name type="ordered locus">SNSL254_A1535</name>
</gene>